<name>VM2_CROAD</name>
<dbReference type="EC" id="3.4.24.-"/>
<dbReference type="EMBL" id="JX457344">
    <property type="protein sequence ID" value="AFS49715.1"/>
    <property type="molecule type" value="mRNA"/>
</dbReference>
<dbReference type="SMR" id="J9Z332"/>
<dbReference type="BRENDA" id="3.4.24.1">
    <property type="organism ID" value="1709"/>
</dbReference>
<dbReference type="GO" id="GO:0005576">
    <property type="term" value="C:extracellular region"/>
    <property type="evidence" value="ECO:0007669"/>
    <property type="project" value="UniProtKB-SubCell"/>
</dbReference>
<dbReference type="GO" id="GO:0005886">
    <property type="term" value="C:plasma membrane"/>
    <property type="evidence" value="ECO:0007669"/>
    <property type="project" value="TreeGrafter"/>
</dbReference>
<dbReference type="GO" id="GO:0046872">
    <property type="term" value="F:metal ion binding"/>
    <property type="evidence" value="ECO:0007669"/>
    <property type="project" value="UniProtKB-KW"/>
</dbReference>
<dbReference type="GO" id="GO:0004222">
    <property type="term" value="F:metalloendopeptidase activity"/>
    <property type="evidence" value="ECO:0007669"/>
    <property type="project" value="InterPro"/>
</dbReference>
<dbReference type="GO" id="GO:0090729">
    <property type="term" value="F:toxin activity"/>
    <property type="evidence" value="ECO:0007669"/>
    <property type="project" value="UniProtKB-KW"/>
</dbReference>
<dbReference type="GO" id="GO:0006508">
    <property type="term" value="P:proteolysis"/>
    <property type="evidence" value="ECO:0007669"/>
    <property type="project" value="UniProtKB-KW"/>
</dbReference>
<dbReference type="CDD" id="cd04269">
    <property type="entry name" value="ZnMc_adamalysin_II_like"/>
    <property type="match status" value="1"/>
</dbReference>
<dbReference type="FunFam" id="4.10.70.10:FF:000003">
    <property type="entry name" value="Disintegrin and metalloproteinase domain-containing protein 17"/>
    <property type="match status" value="1"/>
</dbReference>
<dbReference type="FunFam" id="3.40.390.10:FF:000002">
    <property type="entry name" value="Disintegrin and metalloproteinase domain-containing protein 22"/>
    <property type="match status" value="1"/>
</dbReference>
<dbReference type="Gene3D" id="3.40.390.10">
    <property type="entry name" value="Collagenase (Catalytic Domain)"/>
    <property type="match status" value="1"/>
</dbReference>
<dbReference type="Gene3D" id="4.10.70.10">
    <property type="entry name" value="Disintegrin domain"/>
    <property type="match status" value="1"/>
</dbReference>
<dbReference type="InterPro" id="IPR018358">
    <property type="entry name" value="Disintegrin_CS"/>
</dbReference>
<dbReference type="InterPro" id="IPR001762">
    <property type="entry name" value="Disintegrin_dom"/>
</dbReference>
<dbReference type="InterPro" id="IPR036436">
    <property type="entry name" value="Disintegrin_dom_sf"/>
</dbReference>
<dbReference type="InterPro" id="IPR024079">
    <property type="entry name" value="MetalloPept_cat_dom_sf"/>
</dbReference>
<dbReference type="InterPro" id="IPR001590">
    <property type="entry name" value="Peptidase_M12B"/>
</dbReference>
<dbReference type="InterPro" id="IPR002870">
    <property type="entry name" value="Peptidase_M12B_N"/>
</dbReference>
<dbReference type="InterPro" id="IPR034027">
    <property type="entry name" value="Reprolysin_adamalysin"/>
</dbReference>
<dbReference type="PANTHER" id="PTHR11905">
    <property type="entry name" value="ADAM A DISINTEGRIN AND METALLOPROTEASE DOMAIN"/>
    <property type="match status" value="1"/>
</dbReference>
<dbReference type="PANTHER" id="PTHR11905:SF32">
    <property type="entry name" value="DISINTEGRIN AND METALLOPROTEINASE DOMAIN-CONTAINING PROTEIN 28"/>
    <property type="match status" value="1"/>
</dbReference>
<dbReference type="Pfam" id="PF00200">
    <property type="entry name" value="Disintegrin"/>
    <property type="match status" value="1"/>
</dbReference>
<dbReference type="Pfam" id="PF01562">
    <property type="entry name" value="Pep_M12B_propep"/>
    <property type="match status" value="1"/>
</dbReference>
<dbReference type="Pfam" id="PF01421">
    <property type="entry name" value="Reprolysin"/>
    <property type="match status" value="1"/>
</dbReference>
<dbReference type="PRINTS" id="PR00289">
    <property type="entry name" value="DISINTEGRIN"/>
</dbReference>
<dbReference type="SMART" id="SM00050">
    <property type="entry name" value="DISIN"/>
    <property type="match status" value="1"/>
</dbReference>
<dbReference type="SUPFAM" id="SSF57552">
    <property type="entry name" value="Blood coagulation inhibitor (disintegrin)"/>
    <property type="match status" value="1"/>
</dbReference>
<dbReference type="SUPFAM" id="SSF55486">
    <property type="entry name" value="Metalloproteases ('zincins'), catalytic domain"/>
    <property type="match status" value="1"/>
</dbReference>
<dbReference type="PROSITE" id="PS50215">
    <property type="entry name" value="ADAM_MEPRO"/>
    <property type="match status" value="1"/>
</dbReference>
<dbReference type="PROSITE" id="PS00427">
    <property type="entry name" value="DISINTEGRIN_1"/>
    <property type="match status" value="1"/>
</dbReference>
<dbReference type="PROSITE" id="PS50214">
    <property type="entry name" value="DISINTEGRIN_2"/>
    <property type="match status" value="1"/>
</dbReference>
<sequence length="488" mass="54823">MIQVLLVTICLAVFPYQGSSIILESGNVNDYEVVYPRKVTALPKGAVQLKYEDAMQYEFKVNGEPVVLHLEKNKGLFSEDYSETHYSPDGREITTYPPVEDHCYYHGRIQNDADSTASISACNGLKGHFKLQGEMYLIEPLKLSDSEAHAVYKYENVEKEDEASKMCGVTETNWESYEPIKKASQSNIPPEEEAFYQRYIELVVVADHRMYTKYDGDKTEISSIIYEIVNTLTQIFRPLHIRVALIGLEIWSSGELSKVTLSADDTLEAFGEWRKTVLMNRKRHDNAQLLTGMIFNETIEGRTYKSGMCNPKHSVGIVRDYRTRRHFVANRMAHELGHNLGIDHDRDSCTCGANSCIMSATVSNEPSSQFSDCSLNKYLNYIVRYQSTTRCLHNEPSETDIVSPPFCGNYFKEVGEDCDCGPPANCQNPCCDAATCKLTTGSQCAEGLCCDQCKFTKKGTACRPARGDWNDDTCTGQSADCPRNGLYG</sequence>
<keyword id="KW-0106">Calcium</keyword>
<keyword id="KW-1217">Cell adhesion impairing toxin</keyword>
<keyword id="KW-1015">Disulfide bond</keyword>
<keyword id="KW-0325">Glycoprotein</keyword>
<keyword id="KW-1199">Hemostasis impairing toxin</keyword>
<keyword id="KW-0378">Hydrolase</keyword>
<keyword id="KW-0479">Metal-binding</keyword>
<keyword id="KW-0482">Metalloprotease</keyword>
<keyword id="KW-1201">Platelet aggregation inhibiting toxin</keyword>
<keyword id="KW-0645">Protease</keyword>
<keyword id="KW-0964">Secreted</keyword>
<keyword id="KW-0732">Signal</keyword>
<keyword id="KW-0800">Toxin</keyword>
<keyword id="KW-0862">Zinc</keyword>
<keyword id="KW-0865">Zymogen</keyword>
<protein>
    <recommendedName>
        <fullName>Zinc metalloproteinase-disintegrin VMP-II</fullName>
        <shortName>CamVMP-II</shortName>
        <ecNumber>3.4.24.-</ecNumber>
    </recommendedName>
    <alternativeName>
        <fullName>Disintegrin r-Cam-dis</fullName>
    </alternativeName>
    <alternativeName>
        <fullName>Snake venom metalloproteinase</fullName>
        <shortName>SVMP</shortName>
    </alternativeName>
</protein>
<organism>
    <name type="scientific">Crotalus adamanteus</name>
    <name type="common">Eastern diamondback rattlesnake</name>
    <dbReference type="NCBI Taxonomy" id="8729"/>
    <lineage>
        <taxon>Eukaryota</taxon>
        <taxon>Metazoa</taxon>
        <taxon>Chordata</taxon>
        <taxon>Craniata</taxon>
        <taxon>Vertebrata</taxon>
        <taxon>Euteleostomi</taxon>
        <taxon>Lepidosauria</taxon>
        <taxon>Squamata</taxon>
        <taxon>Bifurcata</taxon>
        <taxon>Unidentata</taxon>
        <taxon>Episquamata</taxon>
        <taxon>Toxicofera</taxon>
        <taxon>Serpentes</taxon>
        <taxon>Colubroidea</taxon>
        <taxon>Viperidae</taxon>
        <taxon>Crotalinae</taxon>
        <taxon>Crotalus</taxon>
    </lineage>
</organism>
<comment type="function">
    <text evidence="1">Zinc metalloproteinase-disintegrin VMP-II: inhibits ADP-induced platelet aggregation (probably by binding integrin alpha-IIb/beta-3 (ITGA2B/ITGB3)) and degrades fibrinogen.</text>
</comment>
<comment type="function">
    <text evidence="6">Recombinant disintegrin r-Cam-dis (413-488): this recombinant protein inhibits platelet adhesion to fibrinogen (IC(50) is 1 nM), inhibits collagen- (IC(50) is 18 nM) and ADP-induced (IC(50) is 6 nM) platelet aggregation, and also inhibits platelet function on clot retraction. May act by binding integrin alpha-IIb/beta-3 (ITGA2B/ITGB3).</text>
</comment>
<comment type="cofactor">
    <cofactor evidence="1">
        <name>Zn(2+)</name>
        <dbReference type="ChEBI" id="CHEBI:29105"/>
    </cofactor>
    <text evidence="1">Binds 1 zinc ion per subunit.</text>
</comment>
<comment type="subunit">
    <text>Homodimer; disulfide-linked (disintegrin).</text>
</comment>
<comment type="subcellular location">
    <subcellularLocation>
        <location evidence="8">Secreted</location>
    </subcellularLocation>
</comment>
<comment type="tissue specificity">
    <text evidence="8">Expressed by the venom gland.</text>
</comment>
<comment type="miscellaneous">
    <text>The disintegrin domain belongs to the long disintegrin subfamily.</text>
</comment>
<comment type="similarity">
    <text evidence="7">Belongs to the venom metalloproteinase (M12B) family. P-II subfamily. P-IIb sub-subfamily.</text>
</comment>
<evidence type="ECO:0000250" key="1"/>
<evidence type="ECO:0000250" key="2">
    <source>
        <dbReference type="UniProtKB" id="Q0NZX5"/>
    </source>
</evidence>
<evidence type="ECO:0000255" key="3"/>
<evidence type="ECO:0000255" key="4">
    <source>
        <dbReference type="PROSITE-ProRule" id="PRU00068"/>
    </source>
</evidence>
<evidence type="ECO:0000255" key="5">
    <source>
        <dbReference type="PROSITE-ProRule" id="PRU00276"/>
    </source>
</evidence>
<evidence type="ECO:0000269" key="6">
    <source>
    </source>
</evidence>
<evidence type="ECO:0000305" key="7"/>
<evidence type="ECO:0000305" key="8">
    <source>
    </source>
</evidence>
<accession>J9Z332</accession>
<reference key="1">
    <citation type="journal article" date="2013" name="Toxicon">
        <title>cDNA cloning of a snake venom metalloproteinase from the eastern diamondback rattlesnake (Crotalus adamanteus), and the expression of its disintegrin domain with anti-platelet effects.</title>
        <authorList>
            <person name="Suntravat M."/>
            <person name="Jia Y."/>
            <person name="Lucena S.E."/>
            <person name="Sanchez E.E."/>
            <person name="Perez J.C."/>
        </authorList>
    </citation>
    <scope>NUCLEOTIDE SEQUENCE [MRNA]</scope>
    <scope>FUNCTION OF RECOMBINANT DISINTEGRIN</scope>
    <source>
        <tissue>Venom gland</tissue>
    </source>
</reference>
<proteinExistence type="evidence at transcript level"/>
<feature type="signal peptide" evidence="3">
    <location>
        <begin position="1"/>
        <end position="20"/>
    </location>
</feature>
<feature type="propeptide" id="PRO_0000424623" evidence="1">
    <location>
        <begin position="21"/>
        <end position="191"/>
    </location>
</feature>
<feature type="chain" id="PRO_0000424624" description="Zinc metalloproteinase-disintegrin VMP-II">
    <location>
        <begin position="192"/>
        <end position="488"/>
    </location>
</feature>
<feature type="domain" description="Peptidase M12B" evidence="5">
    <location>
        <begin position="198"/>
        <end position="396"/>
    </location>
</feature>
<feature type="domain" description="Disintegrin" evidence="4">
    <location>
        <begin position="404"/>
        <end position="488"/>
    </location>
</feature>
<feature type="short sequence motif" description="Cell attachment site">
    <location>
        <begin position="466"/>
        <end position="468"/>
    </location>
</feature>
<feature type="active site" evidence="5">
    <location>
        <position position="335"/>
    </location>
</feature>
<feature type="binding site" evidence="1">
    <location>
        <position position="201"/>
    </location>
    <ligand>
        <name>Ca(2+)</name>
        <dbReference type="ChEBI" id="CHEBI:29108"/>
        <label>1</label>
    </ligand>
</feature>
<feature type="binding site" evidence="1">
    <location>
        <position position="285"/>
    </location>
    <ligand>
        <name>Ca(2+)</name>
        <dbReference type="ChEBI" id="CHEBI:29108"/>
        <label>1</label>
    </ligand>
</feature>
<feature type="binding site" evidence="5">
    <location>
        <position position="334"/>
    </location>
    <ligand>
        <name>Zn(2+)</name>
        <dbReference type="ChEBI" id="CHEBI:29105"/>
        <note>catalytic</note>
    </ligand>
</feature>
<feature type="binding site" evidence="5">
    <location>
        <position position="338"/>
    </location>
    <ligand>
        <name>Zn(2+)</name>
        <dbReference type="ChEBI" id="CHEBI:29105"/>
        <note>catalytic</note>
    </ligand>
</feature>
<feature type="binding site" evidence="5">
    <location>
        <position position="344"/>
    </location>
    <ligand>
        <name>Zn(2+)</name>
        <dbReference type="ChEBI" id="CHEBI:29105"/>
        <note>catalytic</note>
    </ligand>
</feature>
<feature type="binding site" evidence="1">
    <location>
        <position position="391"/>
    </location>
    <ligand>
        <name>Ca(2+)</name>
        <dbReference type="ChEBI" id="CHEBI:29108"/>
        <label>1</label>
    </ligand>
</feature>
<feature type="binding site" evidence="1">
    <location>
        <position position="394"/>
    </location>
    <ligand>
        <name>Ca(2+)</name>
        <dbReference type="ChEBI" id="CHEBI:29108"/>
        <label>1</label>
    </ligand>
</feature>
<feature type="binding site" evidence="1">
    <location>
        <position position="409"/>
    </location>
    <ligand>
        <name>Ca(2+)</name>
        <dbReference type="ChEBI" id="CHEBI:29108"/>
        <label>2</label>
    </ligand>
</feature>
<feature type="binding site" evidence="1">
    <location>
        <position position="413"/>
    </location>
    <ligand>
        <name>Ca(2+)</name>
        <dbReference type="ChEBI" id="CHEBI:29108"/>
        <label>2</label>
    </ligand>
</feature>
<feature type="binding site" evidence="1">
    <location>
        <position position="416"/>
    </location>
    <ligand>
        <name>Ca(2+)</name>
        <dbReference type="ChEBI" id="CHEBI:29108"/>
        <label>2</label>
    </ligand>
</feature>
<feature type="binding site" evidence="1">
    <location>
        <position position="419"/>
    </location>
    <ligand>
        <name>Ca(2+)</name>
        <dbReference type="ChEBI" id="CHEBI:29108"/>
        <label>2</label>
    </ligand>
</feature>
<feature type="glycosylation site" description="N-linked (GlcNAc...) asparagine" evidence="3">
    <location>
        <position position="296"/>
    </location>
</feature>
<feature type="disulfide bond" evidence="5">
    <location>
        <begin position="309"/>
        <end position="391"/>
    </location>
</feature>
<feature type="disulfide bond" evidence="5">
    <location>
        <begin position="349"/>
        <end position="373"/>
    </location>
</feature>
<feature type="disulfide bond" evidence="5">
    <location>
        <begin position="351"/>
        <end position="356"/>
    </location>
</feature>
<feature type="disulfide bond" evidence="7">
    <location>
        <begin position="407"/>
        <end position="426"/>
    </location>
</feature>
<feature type="disulfide bond" evidence="2">
    <location>
        <begin position="418"/>
        <end position="436"/>
    </location>
</feature>
<feature type="disulfide bond" evidence="2">
    <location>
        <begin position="420"/>
        <end position="431"/>
    </location>
</feature>
<feature type="disulfide bond" evidence="2">
    <location>
        <begin position="430"/>
        <end position="453"/>
    </location>
</feature>
<feature type="disulfide bond" evidence="2">
    <location>
        <begin position="444"/>
        <end position="450"/>
    </location>
</feature>
<feature type="disulfide bond" evidence="2">
    <location>
        <begin position="449"/>
        <end position="474"/>
    </location>
</feature>
<feature type="disulfide bond" evidence="2 4">
    <location>
        <begin position="462"/>
        <end position="481"/>
    </location>
</feature>